<keyword id="KW-0997">Cell inner membrane</keyword>
<keyword id="KW-1003">Cell membrane</keyword>
<keyword id="KW-0407">Ion channel</keyword>
<keyword id="KW-0406">Ion transport</keyword>
<keyword id="KW-0472">Membrane</keyword>
<keyword id="KW-0479">Metal-binding</keyword>
<keyword id="KW-1185">Reference proteome</keyword>
<keyword id="KW-0915">Sodium</keyword>
<keyword id="KW-0812">Transmembrane</keyword>
<keyword id="KW-1133">Transmembrane helix</keyword>
<keyword id="KW-0813">Transport</keyword>
<gene>
    <name evidence="1" type="primary">fluC</name>
    <name evidence="1" type="synonym">crcB</name>
    <name type="ordered locus">Geob_1946</name>
</gene>
<organism>
    <name type="scientific">Geotalea daltonii (strain DSM 22248 / JCM 15807 / FRC-32)</name>
    <name type="common">Geobacter daltonii</name>
    <dbReference type="NCBI Taxonomy" id="316067"/>
    <lineage>
        <taxon>Bacteria</taxon>
        <taxon>Pseudomonadati</taxon>
        <taxon>Thermodesulfobacteriota</taxon>
        <taxon>Desulfuromonadia</taxon>
        <taxon>Geobacterales</taxon>
        <taxon>Geobacteraceae</taxon>
        <taxon>Geotalea</taxon>
    </lineage>
</organism>
<reference key="1">
    <citation type="submission" date="2009-01" db="EMBL/GenBank/DDBJ databases">
        <title>Complete sequence of Geobacter sp. FRC-32.</title>
        <authorList>
            <consortium name="US DOE Joint Genome Institute"/>
            <person name="Lucas S."/>
            <person name="Copeland A."/>
            <person name="Lapidus A."/>
            <person name="Glavina del Rio T."/>
            <person name="Dalin E."/>
            <person name="Tice H."/>
            <person name="Bruce D."/>
            <person name="Goodwin L."/>
            <person name="Pitluck S."/>
            <person name="Saunders E."/>
            <person name="Brettin T."/>
            <person name="Detter J.C."/>
            <person name="Han C."/>
            <person name="Larimer F."/>
            <person name="Land M."/>
            <person name="Hauser L."/>
            <person name="Kyrpides N."/>
            <person name="Ovchinnikova G."/>
            <person name="Kostka J."/>
            <person name="Richardson P."/>
        </authorList>
    </citation>
    <scope>NUCLEOTIDE SEQUENCE [LARGE SCALE GENOMIC DNA]</scope>
    <source>
        <strain>DSM 22248 / JCM 15807 / FRC-32</strain>
    </source>
</reference>
<proteinExistence type="inferred from homology"/>
<dbReference type="EMBL" id="CP001390">
    <property type="protein sequence ID" value="ACM20303.1"/>
    <property type="molecule type" value="Genomic_DNA"/>
</dbReference>
<dbReference type="RefSeq" id="WP_012647032.1">
    <property type="nucleotide sequence ID" value="NC_011979.1"/>
</dbReference>
<dbReference type="SMR" id="B9M837"/>
<dbReference type="STRING" id="316067.Geob_1946"/>
<dbReference type="KEGG" id="geo:Geob_1946"/>
<dbReference type="eggNOG" id="COG0239">
    <property type="taxonomic scope" value="Bacteria"/>
</dbReference>
<dbReference type="HOGENOM" id="CLU_114342_3_0_7"/>
<dbReference type="OrthoDB" id="9806299at2"/>
<dbReference type="Proteomes" id="UP000007721">
    <property type="component" value="Chromosome"/>
</dbReference>
<dbReference type="GO" id="GO:0005886">
    <property type="term" value="C:plasma membrane"/>
    <property type="evidence" value="ECO:0007669"/>
    <property type="project" value="UniProtKB-SubCell"/>
</dbReference>
<dbReference type="GO" id="GO:0062054">
    <property type="term" value="F:fluoride channel activity"/>
    <property type="evidence" value="ECO:0007669"/>
    <property type="project" value="UniProtKB-UniRule"/>
</dbReference>
<dbReference type="GO" id="GO:0046872">
    <property type="term" value="F:metal ion binding"/>
    <property type="evidence" value="ECO:0007669"/>
    <property type="project" value="UniProtKB-KW"/>
</dbReference>
<dbReference type="GO" id="GO:0140114">
    <property type="term" value="P:cellular detoxification of fluoride"/>
    <property type="evidence" value="ECO:0007669"/>
    <property type="project" value="UniProtKB-UniRule"/>
</dbReference>
<dbReference type="HAMAP" id="MF_00454">
    <property type="entry name" value="FluC"/>
    <property type="match status" value="1"/>
</dbReference>
<dbReference type="InterPro" id="IPR003691">
    <property type="entry name" value="FluC"/>
</dbReference>
<dbReference type="NCBIfam" id="TIGR00494">
    <property type="entry name" value="crcB"/>
    <property type="match status" value="1"/>
</dbReference>
<dbReference type="PANTHER" id="PTHR28259">
    <property type="entry name" value="FLUORIDE EXPORT PROTEIN 1-RELATED"/>
    <property type="match status" value="1"/>
</dbReference>
<dbReference type="PANTHER" id="PTHR28259:SF1">
    <property type="entry name" value="FLUORIDE EXPORT PROTEIN 1-RELATED"/>
    <property type="match status" value="1"/>
</dbReference>
<dbReference type="Pfam" id="PF02537">
    <property type="entry name" value="CRCB"/>
    <property type="match status" value="1"/>
</dbReference>
<sequence length="124" mass="13596">MQTVIFIGIFGALGCLCRYYLSGWVYDIVGRAFPYGTFAVNIIGAFLIGLIMEFSLRSTLVSPQLRVGLTIGFLGGLTTFSTFSYETFRLLEDGELLIASVNVLTSVLVCLVFTWLGIAAARYI</sequence>
<protein>
    <recommendedName>
        <fullName evidence="1">Fluoride-specific ion channel FluC</fullName>
    </recommendedName>
</protein>
<comment type="function">
    <text evidence="1">Fluoride-specific ion channel. Important for reducing fluoride concentration in the cell, thus reducing its toxicity.</text>
</comment>
<comment type="catalytic activity">
    <reaction evidence="1">
        <text>fluoride(in) = fluoride(out)</text>
        <dbReference type="Rhea" id="RHEA:76159"/>
        <dbReference type="ChEBI" id="CHEBI:17051"/>
    </reaction>
    <physiologicalReaction direction="left-to-right" evidence="1">
        <dbReference type="Rhea" id="RHEA:76160"/>
    </physiologicalReaction>
</comment>
<comment type="activity regulation">
    <text evidence="1">Na(+) is not transported, but it plays an essential structural role and its presence is essential for fluoride channel function.</text>
</comment>
<comment type="subcellular location">
    <subcellularLocation>
        <location evidence="1">Cell inner membrane</location>
        <topology evidence="1">Multi-pass membrane protein</topology>
    </subcellularLocation>
</comment>
<comment type="similarity">
    <text evidence="1">Belongs to the fluoride channel Fluc/FEX (TC 1.A.43) family.</text>
</comment>
<evidence type="ECO:0000255" key="1">
    <source>
        <dbReference type="HAMAP-Rule" id="MF_00454"/>
    </source>
</evidence>
<accession>B9M837</accession>
<feature type="chain" id="PRO_1000206251" description="Fluoride-specific ion channel FluC">
    <location>
        <begin position="1"/>
        <end position="124"/>
    </location>
</feature>
<feature type="transmembrane region" description="Helical" evidence="1">
    <location>
        <begin position="4"/>
        <end position="24"/>
    </location>
</feature>
<feature type="transmembrane region" description="Helical" evidence="1">
    <location>
        <begin position="32"/>
        <end position="52"/>
    </location>
</feature>
<feature type="transmembrane region" description="Helical" evidence="1">
    <location>
        <begin position="68"/>
        <end position="88"/>
    </location>
</feature>
<feature type="transmembrane region" description="Helical" evidence="1">
    <location>
        <begin position="96"/>
        <end position="116"/>
    </location>
</feature>
<feature type="binding site" evidence="1">
    <location>
        <position position="75"/>
    </location>
    <ligand>
        <name>Na(+)</name>
        <dbReference type="ChEBI" id="CHEBI:29101"/>
        <note>structural</note>
    </ligand>
</feature>
<feature type="binding site" evidence="1">
    <location>
        <position position="78"/>
    </location>
    <ligand>
        <name>Na(+)</name>
        <dbReference type="ChEBI" id="CHEBI:29101"/>
        <note>structural</note>
    </ligand>
</feature>
<name>FLUC_GEODF</name>